<gene>
    <name evidence="1" type="primary">xylA</name>
    <name type="ordered locus">E2348C_3817</name>
</gene>
<evidence type="ECO:0000255" key="1">
    <source>
        <dbReference type="HAMAP-Rule" id="MF_00455"/>
    </source>
</evidence>
<keyword id="KW-0119">Carbohydrate metabolism</keyword>
<keyword id="KW-0963">Cytoplasm</keyword>
<keyword id="KW-0413">Isomerase</keyword>
<keyword id="KW-0460">Magnesium</keyword>
<keyword id="KW-0479">Metal-binding</keyword>
<keyword id="KW-1185">Reference proteome</keyword>
<keyword id="KW-0859">Xylose metabolism</keyword>
<proteinExistence type="inferred from homology"/>
<accession>B7ULC6</accession>
<sequence>MQAYFDQLDRVRYEGSKSSNPLAFRHYNPDELVLGKRMEEHLRFAACYWHTFCWNGADMFGVGAFNRPWQQPGEALALAKRKADVAFEFFHKLHVPFYCFHDVDVSPEGASLKEYINNFAQMVDVLAGKQEESGVKLLWGTANCFTNPRYGAGAATNPDPEVFSWAATQVVTAMEATHKLGGENYVLWGGREGYETLLNTDLRQEREQLGRFMQMVVEHKHKIGFQGTLLIEPKPQEPTKHQYDYDAATVYGFLKQFGLEKEIKLNIEANHATLAGHSFHHEIATAIALGLFGSVDANRGDAQLGWDTDQFPNSVEENALVMYEILKAGGFTTGGLNFDAKVRRQSTDKYDLFYGHIGAMDTMALALKIAARMIEDGELDKRIAQRYSGWNSELGQQILKGQMSLADLAKYAQEHNLSPVHQSGRQEQLENLVNHYLFDK</sequence>
<name>XYLA_ECO27</name>
<protein>
    <recommendedName>
        <fullName evidence="1">Xylose isomerase</fullName>
        <ecNumber evidence="1">5.3.1.5</ecNumber>
    </recommendedName>
</protein>
<organism>
    <name type="scientific">Escherichia coli O127:H6 (strain E2348/69 / EPEC)</name>
    <dbReference type="NCBI Taxonomy" id="574521"/>
    <lineage>
        <taxon>Bacteria</taxon>
        <taxon>Pseudomonadati</taxon>
        <taxon>Pseudomonadota</taxon>
        <taxon>Gammaproteobacteria</taxon>
        <taxon>Enterobacterales</taxon>
        <taxon>Enterobacteriaceae</taxon>
        <taxon>Escherichia</taxon>
    </lineage>
</organism>
<dbReference type="EC" id="5.3.1.5" evidence="1"/>
<dbReference type="EMBL" id="FM180568">
    <property type="protein sequence ID" value="CAS11365.1"/>
    <property type="molecule type" value="Genomic_DNA"/>
</dbReference>
<dbReference type="RefSeq" id="WP_001149592.1">
    <property type="nucleotide sequence ID" value="NC_011601.1"/>
</dbReference>
<dbReference type="SMR" id="B7ULC6"/>
<dbReference type="GeneID" id="75173765"/>
<dbReference type="KEGG" id="ecg:E2348C_3817"/>
<dbReference type="HOGENOM" id="CLU_037261_1_0_6"/>
<dbReference type="Proteomes" id="UP000008205">
    <property type="component" value="Chromosome"/>
</dbReference>
<dbReference type="GO" id="GO:0005737">
    <property type="term" value="C:cytoplasm"/>
    <property type="evidence" value="ECO:0007669"/>
    <property type="project" value="UniProtKB-SubCell"/>
</dbReference>
<dbReference type="GO" id="GO:0000287">
    <property type="term" value="F:magnesium ion binding"/>
    <property type="evidence" value="ECO:0007669"/>
    <property type="project" value="UniProtKB-UniRule"/>
</dbReference>
<dbReference type="GO" id="GO:0009045">
    <property type="term" value="F:xylose isomerase activity"/>
    <property type="evidence" value="ECO:0007669"/>
    <property type="project" value="UniProtKB-UniRule"/>
</dbReference>
<dbReference type="GO" id="GO:0042732">
    <property type="term" value="P:D-xylose metabolic process"/>
    <property type="evidence" value="ECO:0007669"/>
    <property type="project" value="UniProtKB-UniRule"/>
</dbReference>
<dbReference type="FunFam" id="3.20.20.150:FF:000002">
    <property type="entry name" value="Xylose isomerase"/>
    <property type="match status" value="1"/>
</dbReference>
<dbReference type="Gene3D" id="3.20.20.150">
    <property type="entry name" value="Divalent-metal-dependent TIM barrel enzymes"/>
    <property type="match status" value="1"/>
</dbReference>
<dbReference type="HAMAP" id="MF_00455">
    <property type="entry name" value="Xylose_isom_A"/>
    <property type="match status" value="1"/>
</dbReference>
<dbReference type="InterPro" id="IPR036237">
    <property type="entry name" value="Xyl_isomerase-like_sf"/>
</dbReference>
<dbReference type="InterPro" id="IPR013452">
    <property type="entry name" value="Xylose_isom_bac"/>
</dbReference>
<dbReference type="InterPro" id="IPR001998">
    <property type="entry name" value="Xylose_isomerase"/>
</dbReference>
<dbReference type="NCBIfam" id="NF003998">
    <property type="entry name" value="PRK05474.1"/>
    <property type="match status" value="1"/>
</dbReference>
<dbReference type="NCBIfam" id="TIGR02630">
    <property type="entry name" value="xylose_isom_A"/>
    <property type="match status" value="1"/>
</dbReference>
<dbReference type="PANTHER" id="PTHR48408">
    <property type="match status" value="1"/>
</dbReference>
<dbReference type="PANTHER" id="PTHR48408:SF1">
    <property type="entry name" value="XYLOSE ISOMERASE"/>
    <property type="match status" value="1"/>
</dbReference>
<dbReference type="PRINTS" id="PR00688">
    <property type="entry name" value="XYLOSISMRASE"/>
</dbReference>
<dbReference type="SUPFAM" id="SSF51658">
    <property type="entry name" value="Xylose isomerase-like"/>
    <property type="match status" value="1"/>
</dbReference>
<dbReference type="PROSITE" id="PS51415">
    <property type="entry name" value="XYLOSE_ISOMERASE"/>
    <property type="match status" value="1"/>
</dbReference>
<comment type="catalytic activity">
    <reaction evidence="1">
        <text>alpha-D-xylose = alpha-D-xylulofuranose</text>
        <dbReference type="Rhea" id="RHEA:22816"/>
        <dbReference type="ChEBI" id="CHEBI:28518"/>
        <dbReference type="ChEBI" id="CHEBI:188998"/>
        <dbReference type="EC" id="5.3.1.5"/>
    </reaction>
</comment>
<comment type="cofactor">
    <cofactor evidence="1">
        <name>Mg(2+)</name>
        <dbReference type="ChEBI" id="CHEBI:18420"/>
    </cofactor>
    <text evidence="1">Binds 2 magnesium ions per subunit.</text>
</comment>
<comment type="subunit">
    <text evidence="1">Homotetramer.</text>
</comment>
<comment type="subcellular location">
    <subcellularLocation>
        <location evidence="1">Cytoplasm</location>
    </subcellularLocation>
</comment>
<comment type="similarity">
    <text evidence="1">Belongs to the xylose isomerase family.</text>
</comment>
<feature type="chain" id="PRO_1000200291" description="Xylose isomerase">
    <location>
        <begin position="1"/>
        <end position="440"/>
    </location>
</feature>
<feature type="binding site" evidence="1">
    <location>
        <position position="307"/>
    </location>
    <ligand>
        <name>Mg(2+)</name>
        <dbReference type="ChEBI" id="CHEBI:18420"/>
        <label>2</label>
    </ligand>
</feature>
<feature type="binding site" evidence="1">
    <location>
        <position position="309"/>
    </location>
    <ligand>
        <name>Mg(2+)</name>
        <dbReference type="ChEBI" id="CHEBI:18420"/>
        <label>2</label>
    </ligand>
</feature>
<reference key="1">
    <citation type="journal article" date="2009" name="J. Bacteriol.">
        <title>Complete genome sequence and comparative genome analysis of enteropathogenic Escherichia coli O127:H6 strain E2348/69.</title>
        <authorList>
            <person name="Iguchi A."/>
            <person name="Thomson N.R."/>
            <person name="Ogura Y."/>
            <person name="Saunders D."/>
            <person name="Ooka T."/>
            <person name="Henderson I.R."/>
            <person name="Harris D."/>
            <person name="Asadulghani M."/>
            <person name="Kurokawa K."/>
            <person name="Dean P."/>
            <person name="Kenny B."/>
            <person name="Quail M.A."/>
            <person name="Thurston S."/>
            <person name="Dougan G."/>
            <person name="Hayashi T."/>
            <person name="Parkhill J."/>
            <person name="Frankel G."/>
        </authorList>
    </citation>
    <scope>NUCLEOTIDE SEQUENCE [LARGE SCALE GENOMIC DNA]</scope>
    <source>
        <strain>E2348/69 / EPEC</strain>
    </source>
</reference>